<reference key="1">
    <citation type="journal article" date="2000" name="Nature">
        <title>Sequence and analysis of chromosome 1 of the plant Arabidopsis thaliana.</title>
        <authorList>
            <person name="Theologis A."/>
            <person name="Ecker J.R."/>
            <person name="Palm C.J."/>
            <person name="Federspiel N.A."/>
            <person name="Kaul S."/>
            <person name="White O."/>
            <person name="Alonso J."/>
            <person name="Altafi H."/>
            <person name="Araujo R."/>
            <person name="Bowman C.L."/>
            <person name="Brooks S.Y."/>
            <person name="Buehler E."/>
            <person name="Chan A."/>
            <person name="Chao Q."/>
            <person name="Chen H."/>
            <person name="Cheuk R.F."/>
            <person name="Chin C.W."/>
            <person name="Chung M.K."/>
            <person name="Conn L."/>
            <person name="Conway A.B."/>
            <person name="Conway A.R."/>
            <person name="Creasy T.H."/>
            <person name="Dewar K."/>
            <person name="Dunn P."/>
            <person name="Etgu P."/>
            <person name="Feldblyum T.V."/>
            <person name="Feng J.-D."/>
            <person name="Fong B."/>
            <person name="Fujii C.Y."/>
            <person name="Gill J.E."/>
            <person name="Goldsmith A.D."/>
            <person name="Haas B."/>
            <person name="Hansen N.F."/>
            <person name="Hughes B."/>
            <person name="Huizar L."/>
            <person name="Hunter J.L."/>
            <person name="Jenkins J."/>
            <person name="Johnson-Hopson C."/>
            <person name="Khan S."/>
            <person name="Khaykin E."/>
            <person name="Kim C.J."/>
            <person name="Koo H.L."/>
            <person name="Kremenetskaia I."/>
            <person name="Kurtz D.B."/>
            <person name="Kwan A."/>
            <person name="Lam B."/>
            <person name="Langin-Hooper S."/>
            <person name="Lee A."/>
            <person name="Lee J.M."/>
            <person name="Lenz C.A."/>
            <person name="Li J.H."/>
            <person name="Li Y.-P."/>
            <person name="Lin X."/>
            <person name="Liu S.X."/>
            <person name="Liu Z.A."/>
            <person name="Luros J.S."/>
            <person name="Maiti R."/>
            <person name="Marziali A."/>
            <person name="Militscher J."/>
            <person name="Miranda M."/>
            <person name="Nguyen M."/>
            <person name="Nierman W.C."/>
            <person name="Osborne B.I."/>
            <person name="Pai G."/>
            <person name="Peterson J."/>
            <person name="Pham P.K."/>
            <person name="Rizzo M."/>
            <person name="Rooney T."/>
            <person name="Rowley D."/>
            <person name="Sakano H."/>
            <person name="Salzberg S.L."/>
            <person name="Schwartz J.R."/>
            <person name="Shinn P."/>
            <person name="Southwick A.M."/>
            <person name="Sun H."/>
            <person name="Tallon L.J."/>
            <person name="Tambunga G."/>
            <person name="Toriumi M.J."/>
            <person name="Town C.D."/>
            <person name="Utterback T."/>
            <person name="Van Aken S."/>
            <person name="Vaysberg M."/>
            <person name="Vysotskaia V.S."/>
            <person name="Walker M."/>
            <person name="Wu D."/>
            <person name="Yu G."/>
            <person name="Fraser C.M."/>
            <person name="Venter J.C."/>
            <person name="Davis R.W."/>
        </authorList>
    </citation>
    <scope>NUCLEOTIDE SEQUENCE [LARGE SCALE GENOMIC DNA]</scope>
    <source>
        <strain>cv. Columbia</strain>
    </source>
</reference>
<reference key="2">
    <citation type="journal article" date="2017" name="Plant J.">
        <title>Araport11: a complete reannotation of the Arabidopsis thaliana reference genome.</title>
        <authorList>
            <person name="Cheng C.Y."/>
            <person name="Krishnakumar V."/>
            <person name="Chan A.P."/>
            <person name="Thibaud-Nissen F."/>
            <person name="Schobel S."/>
            <person name="Town C.D."/>
        </authorList>
    </citation>
    <scope>GENOME REANNOTATION</scope>
    <source>
        <strain>cv. Columbia</strain>
    </source>
</reference>
<dbReference type="EMBL" id="AC008148">
    <property type="status" value="NOT_ANNOTATED_CDS"/>
    <property type="molecule type" value="Genomic_DNA"/>
</dbReference>
<dbReference type="EMBL" id="CP002684">
    <property type="protein sequence ID" value="AEE35144.1"/>
    <property type="molecule type" value="Genomic_DNA"/>
</dbReference>
<dbReference type="RefSeq" id="NP_177252.1">
    <property type="nucleotide sequence ID" value="NM_105764.1"/>
</dbReference>
<dbReference type="STRING" id="3702.Q3ECE2"/>
<dbReference type="PaxDb" id="3702-AT1G70960.1"/>
<dbReference type="EnsemblPlants" id="AT1G70960.1">
    <property type="protein sequence ID" value="AT1G70960.1"/>
    <property type="gene ID" value="AT1G70960"/>
</dbReference>
<dbReference type="GeneID" id="843434"/>
<dbReference type="Gramene" id="AT1G70960.1">
    <property type="protein sequence ID" value="AT1G70960.1"/>
    <property type="gene ID" value="AT1G70960"/>
</dbReference>
<dbReference type="KEGG" id="ath:AT1G70960"/>
<dbReference type="Araport" id="AT1G70960"/>
<dbReference type="TAIR" id="AT1G70960"/>
<dbReference type="HOGENOM" id="CLU_027176_8_1_1"/>
<dbReference type="InParanoid" id="Q3ECE2"/>
<dbReference type="OMA" id="WIMNELE"/>
<dbReference type="PhylomeDB" id="Q3ECE2"/>
<dbReference type="PRO" id="PR:Q3ECE2"/>
<dbReference type="Proteomes" id="UP000006548">
    <property type="component" value="Chromosome 1"/>
</dbReference>
<dbReference type="ExpressionAtlas" id="Q3ECE2">
    <property type="expression patterns" value="baseline"/>
</dbReference>
<dbReference type="InterPro" id="IPR013187">
    <property type="entry name" value="F-box-assoc_dom_typ3"/>
</dbReference>
<dbReference type="InterPro" id="IPR017451">
    <property type="entry name" value="F-box-assoc_interact_dom"/>
</dbReference>
<dbReference type="InterPro" id="IPR036047">
    <property type="entry name" value="F-box-like_dom_sf"/>
</dbReference>
<dbReference type="InterPro" id="IPR001810">
    <property type="entry name" value="F-box_dom"/>
</dbReference>
<dbReference type="NCBIfam" id="TIGR01640">
    <property type="entry name" value="F_box_assoc_1"/>
    <property type="match status" value="1"/>
</dbReference>
<dbReference type="PANTHER" id="PTHR31111">
    <property type="entry name" value="BNAA05G37150D PROTEIN-RELATED"/>
    <property type="match status" value="1"/>
</dbReference>
<dbReference type="PANTHER" id="PTHR31111:SF138">
    <property type="entry name" value="F-BOX ASSOCIATED DOMAIN-CONTAINING PROTEIN"/>
    <property type="match status" value="1"/>
</dbReference>
<dbReference type="Pfam" id="PF00646">
    <property type="entry name" value="F-box"/>
    <property type="match status" value="1"/>
</dbReference>
<dbReference type="Pfam" id="PF08268">
    <property type="entry name" value="FBA_3"/>
    <property type="match status" value="1"/>
</dbReference>
<dbReference type="SMART" id="SM00256">
    <property type="entry name" value="FBOX"/>
    <property type="match status" value="1"/>
</dbReference>
<dbReference type="SUPFAM" id="SSF81383">
    <property type="entry name" value="F-box domain"/>
    <property type="match status" value="1"/>
</dbReference>
<dbReference type="PROSITE" id="PS50181">
    <property type="entry name" value="FBOX"/>
    <property type="match status" value="1"/>
</dbReference>
<proteinExistence type="predicted"/>
<organism>
    <name type="scientific">Arabidopsis thaliana</name>
    <name type="common">Mouse-ear cress</name>
    <dbReference type="NCBI Taxonomy" id="3702"/>
    <lineage>
        <taxon>Eukaryota</taxon>
        <taxon>Viridiplantae</taxon>
        <taxon>Streptophyta</taxon>
        <taxon>Embryophyta</taxon>
        <taxon>Tracheophyta</taxon>
        <taxon>Spermatophyta</taxon>
        <taxon>Magnoliopsida</taxon>
        <taxon>eudicotyledons</taxon>
        <taxon>Gunneridae</taxon>
        <taxon>Pentapetalae</taxon>
        <taxon>rosids</taxon>
        <taxon>malvids</taxon>
        <taxon>Brassicales</taxon>
        <taxon>Brassicaceae</taxon>
        <taxon>Camelineae</taxon>
        <taxon>Arabidopsis</taxon>
    </lineage>
</organism>
<name>FB85_ARATH</name>
<protein>
    <recommendedName>
        <fullName>Putative F-box protein At1g70960</fullName>
    </recommendedName>
</protein>
<accession>Q3ECE2</accession>
<evidence type="ECO:0000255" key="1">
    <source>
        <dbReference type="PROSITE-ProRule" id="PRU00080"/>
    </source>
</evidence>
<sequence length="369" mass="43411">MVNTSFETLPRHMQMEILSRVPLKFLMKFMCVSKKWASIIRGEEFREDYLFQSMKRPRVLFVIDHREYLPIKPEAFFHSVYQEDQPLLLSGKQRMRTFETPLVQVFQPIRGLICQQGYGKIVICNPGLKKFRSLPQIKVHKGAPMRTFFGYDEDKDVFKVLCITWLRNGKRSEVSKEYLVYTMGSDEESSSWRLITCEHDHAPVTEGLFKGGVLYYGAKSNNGKSVVMSFNVNSEDFSVIELEVEISPYWRLVNYKGDIALMNNIEDSLYHSREFEMWVRNEVTGNWDRTSIKISHWNGTVDGKTFYFKGTIGTKELAFAPDYWFGEQHFVSYYDTETKNLRRFDIEGMVDQDDFVRTFFDHVDSTWLI</sequence>
<feature type="chain" id="PRO_0000283358" description="Putative F-box protein At1g70960">
    <location>
        <begin position="1"/>
        <end position="369"/>
    </location>
</feature>
<feature type="domain" description="F-box" evidence="1">
    <location>
        <begin position="3"/>
        <end position="54"/>
    </location>
</feature>
<gene>
    <name type="ordered locus">At1g70960</name>
    <name type="ORF">F15H11.27</name>
</gene>
<keyword id="KW-1185">Reference proteome</keyword>